<comment type="function">
    <text evidence="1">Catalyzes the conversion of L-arabinose to L-ribulose.</text>
</comment>
<comment type="catalytic activity">
    <reaction evidence="1">
        <text>beta-L-arabinopyranose = L-ribulose</text>
        <dbReference type="Rhea" id="RHEA:14821"/>
        <dbReference type="ChEBI" id="CHEBI:16880"/>
        <dbReference type="ChEBI" id="CHEBI:40886"/>
        <dbReference type="EC" id="5.3.1.4"/>
    </reaction>
</comment>
<comment type="cofactor">
    <cofactor evidence="1">
        <name>Mn(2+)</name>
        <dbReference type="ChEBI" id="CHEBI:29035"/>
    </cofactor>
    <text evidence="1">Binds 1 Mn(2+) ion per subunit.</text>
</comment>
<comment type="pathway">
    <text evidence="1">Carbohydrate degradation; L-arabinose degradation via L-ribulose; D-xylulose 5-phosphate from L-arabinose (bacterial route): step 1/3.</text>
</comment>
<comment type="subunit">
    <text evidence="1">Homohexamer.</text>
</comment>
<comment type="similarity">
    <text evidence="1">Belongs to the arabinose isomerase family.</text>
</comment>
<protein>
    <recommendedName>
        <fullName evidence="1">L-arabinose isomerase</fullName>
        <ecNumber evidence="1">5.3.1.4</ecNumber>
    </recommendedName>
</protein>
<feature type="chain" id="PRO_1000060916" description="L-arabinose isomerase">
    <location>
        <begin position="1"/>
        <end position="500"/>
    </location>
</feature>
<feature type="binding site" evidence="1">
    <location>
        <position position="306"/>
    </location>
    <ligand>
        <name>Mn(2+)</name>
        <dbReference type="ChEBI" id="CHEBI:29035"/>
    </ligand>
</feature>
<feature type="binding site" evidence="1">
    <location>
        <position position="333"/>
    </location>
    <ligand>
        <name>Mn(2+)</name>
        <dbReference type="ChEBI" id="CHEBI:29035"/>
    </ligand>
</feature>
<feature type="binding site" evidence="1">
    <location>
        <position position="350"/>
    </location>
    <ligand>
        <name>Mn(2+)</name>
        <dbReference type="ChEBI" id="CHEBI:29035"/>
    </ligand>
</feature>
<feature type="binding site" evidence="1">
    <location>
        <position position="450"/>
    </location>
    <ligand>
        <name>Mn(2+)</name>
        <dbReference type="ChEBI" id="CHEBI:29035"/>
    </ligand>
</feature>
<organism>
    <name type="scientific">Yersinia pseudotuberculosis serotype O:1b (strain IP 31758)</name>
    <dbReference type="NCBI Taxonomy" id="349747"/>
    <lineage>
        <taxon>Bacteria</taxon>
        <taxon>Pseudomonadati</taxon>
        <taxon>Pseudomonadota</taxon>
        <taxon>Gammaproteobacteria</taxon>
        <taxon>Enterobacterales</taxon>
        <taxon>Yersiniaceae</taxon>
        <taxon>Yersinia</taxon>
    </lineage>
</organism>
<proteinExistence type="inferred from homology"/>
<accession>A7FHY4</accession>
<name>ARAA_YERP3</name>
<sequence length="500" mass="55586">MDVFKQSEVWFVIGSQNLYGPKTLQQVMDNAHQVVNSLNSEAGLPVKLVLKPLVTTPDEITALCREANYDTACIGIMTWLHTFSPAKMWIGGLSILNKPLLQFHTQFNAQIPWETMDMDFMNLNQTAHGGREFGFIGARMRQQHSVITGHWQDKEAHQRIGQWMRVAAAKQESQQLKVARFGDNMREVAVTEGDKVAAQIQFGYSVNAYGIGDLVAVVDAVSKGDIDTLVEEYEATYRFSDAVKLNGDKRENLLDAARIELGMKRFLEQGGFKAFTTNFENLYGLKQLPGLAVQRLMQQGYGFGGEGDWKTAALLRILKVMGTGLKGGTSFMEDYTYNFQPGNDLVVGSHMLEVCPSIAKEEKPLLDVQHLGIGGKADPARLIFSTPAGPALNASLIDMGNRFRLLVNVVDTVEQPHPLPKLPVARAIWQAQPSLATAAEAWIIAGGAHHTVFSQAVGVDELRLYAEMHGIEFLLIDNDTTLPAFKNEIRWNEVYYQLNR</sequence>
<keyword id="KW-0054">Arabinose catabolism</keyword>
<keyword id="KW-0119">Carbohydrate metabolism</keyword>
<keyword id="KW-0413">Isomerase</keyword>
<keyword id="KW-0464">Manganese</keyword>
<keyword id="KW-0479">Metal-binding</keyword>
<evidence type="ECO:0000255" key="1">
    <source>
        <dbReference type="HAMAP-Rule" id="MF_00519"/>
    </source>
</evidence>
<dbReference type="EC" id="5.3.1.4" evidence="1"/>
<dbReference type="EMBL" id="CP000720">
    <property type="protein sequence ID" value="ABS47251.1"/>
    <property type="molecule type" value="Genomic_DNA"/>
</dbReference>
<dbReference type="RefSeq" id="WP_012105092.1">
    <property type="nucleotide sequence ID" value="NC_009708.1"/>
</dbReference>
<dbReference type="SMR" id="A7FHY4"/>
<dbReference type="KEGG" id="ypi:YpsIP31758_1887"/>
<dbReference type="HOGENOM" id="CLU_045663_0_0_6"/>
<dbReference type="UniPathway" id="UPA00145">
    <property type="reaction ID" value="UER00565"/>
</dbReference>
<dbReference type="Proteomes" id="UP000002412">
    <property type="component" value="Chromosome"/>
</dbReference>
<dbReference type="GO" id="GO:0005829">
    <property type="term" value="C:cytosol"/>
    <property type="evidence" value="ECO:0007669"/>
    <property type="project" value="TreeGrafter"/>
</dbReference>
<dbReference type="GO" id="GO:0008733">
    <property type="term" value="F:L-arabinose isomerase activity"/>
    <property type="evidence" value="ECO:0007669"/>
    <property type="project" value="UniProtKB-UniRule"/>
</dbReference>
<dbReference type="GO" id="GO:0030145">
    <property type="term" value="F:manganese ion binding"/>
    <property type="evidence" value="ECO:0007669"/>
    <property type="project" value="UniProtKB-UniRule"/>
</dbReference>
<dbReference type="GO" id="GO:0019569">
    <property type="term" value="P:L-arabinose catabolic process to xylulose 5-phosphate"/>
    <property type="evidence" value="ECO:0007669"/>
    <property type="project" value="UniProtKB-UniRule"/>
</dbReference>
<dbReference type="CDD" id="cd03557">
    <property type="entry name" value="L-arabinose_isomerase"/>
    <property type="match status" value="1"/>
</dbReference>
<dbReference type="FunFam" id="3.40.50.10940:FF:000001">
    <property type="entry name" value="L-arabinose isomerase"/>
    <property type="match status" value="1"/>
</dbReference>
<dbReference type="Gene3D" id="3.40.50.10940">
    <property type="match status" value="1"/>
</dbReference>
<dbReference type="HAMAP" id="MF_00519">
    <property type="entry name" value="Arabinose_Isome"/>
    <property type="match status" value="1"/>
</dbReference>
<dbReference type="InterPro" id="IPR024664">
    <property type="entry name" value="Ara_Isoase_C"/>
</dbReference>
<dbReference type="InterPro" id="IPR055390">
    <property type="entry name" value="AraA_central"/>
</dbReference>
<dbReference type="InterPro" id="IPR055389">
    <property type="entry name" value="AraA_N"/>
</dbReference>
<dbReference type="InterPro" id="IPR038583">
    <property type="entry name" value="AraA_N_sf"/>
</dbReference>
<dbReference type="InterPro" id="IPR004216">
    <property type="entry name" value="Fuc/Ara_isomerase_C"/>
</dbReference>
<dbReference type="InterPro" id="IPR009015">
    <property type="entry name" value="Fucose_isomerase_N/cen_sf"/>
</dbReference>
<dbReference type="InterPro" id="IPR003762">
    <property type="entry name" value="Lara_isomerase"/>
</dbReference>
<dbReference type="NCBIfam" id="NF002795">
    <property type="entry name" value="PRK02929.1"/>
    <property type="match status" value="1"/>
</dbReference>
<dbReference type="PANTHER" id="PTHR38464">
    <property type="entry name" value="L-ARABINOSE ISOMERASE"/>
    <property type="match status" value="1"/>
</dbReference>
<dbReference type="PANTHER" id="PTHR38464:SF1">
    <property type="entry name" value="L-ARABINOSE ISOMERASE"/>
    <property type="match status" value="1"/>
</dbReference>
<dbReference type="Pfam" id="PF24856">
    <property type="entry name" value="AraA_central"/>
    <property type="match status" value="1"/>
</dbReference>
<dbReference type="Pfam" id="PF02610">
    <property type="entry name" value="AraA_N"/>
    <property type="match status" value="1"/>
</dbReference>
<dbReference type="Pfam" id="PF11762">
    <property type="entry name" value="Arabinose_Iso_C"/>
    <property type="match status" value="1"/>
</dbReference>
<dbReference type="PIRSF" id="PIRSF001478">
    <property type="entry name" value="L-ara_isomerase"/>
    <property type="match status" value="1"/>
</dbReference>
<dbReference type="SUPFAM" id="SSF50443">
    <property type="entry name" value="FucI/AraA C-terminal domain-like"/>
    <property type="match status" value="1"/>
</dbReference>
<dbReference type="SUPFAM" id="SSF53743">
    <property type="entry name" value="FucI/AraA N-terminal and middle domains"/>
    <property type="match status" value="1"/>
</dbReference>
<gene>
    <name evidence="1" type="primary">araA</name>
    <name type="ordered locus">YpsIP31758_1887</name>
</gene>
<reference key="1">
    <citation type="journal article" date="2007" name="PLoS Genet.">
        <title>The complete genome sequence of Yersinia pseudotuberculosis IP31758, the causative agent of Far East scarlet-like fever.</title>
        <authorList>
            <person name="Eppinger M."/>
            <person name="Rosovitz M.J."/>
            <person name="Fricke W.F."/>
            <person name="Rasko D.A."/>
            <person name="Kokorina G."/>
            <person name="Fayolle C."/>
            <person name="Lindler L.E."/>
            <person name="Carniel E."/>
            <person name="Ravel J."/>
        </authorList>
    </citation>
    <scope>NUCLEOTIDE SEQUENCE [LARGE SCALE GENOMIC DNA]</scope>
    <source>
        <strain>IP 31758</strain>
    </source>
</reference>